<protein>
    <recommendedName>
        <fullName>U8-theraphotoxin-Hhn1c 2</fullName>
        <shortName>U8-TRTX-Hhn1c 2</shortName>
    </recommendedName>
    <alternativeName>
        <fullName evidence="5">Hainantoxin-XIV-3.2</fullName>
        <shortName evidence="5">HNTX-XIV-3.2</shortName>
    </alternativeName>
</protein>
<sequence>MKVVLLVCLVWMMAMMELVSCECWSQADCSDGHCCAGSSFSKNCRPYGGDGEQCEPRNKYEVYSTGCPCEENLMCSVINRCQSA</sequence>
<name>H14C2_CYRHA</name>
<comment type="subcellular location">
    <subcellularLocation>
        <location evidence="1">Secreted</location>
    </subcellularLocation>
</comment>
<comment type="tissue specificity">
    <text>Expressed by the venom gland.</text>
</comment>
<comment type="similarity">
    <text evidence="4">Belongs to the AVIT (prokineticin) family.</text>
</comment>
<accession>D2Y2E2</accession>
<dbReference type="EMBL" id="GU293019">
    <property type="protein sequence ID" value="ADB56835.1"/>
    <property type="molecule type" value="mRNA"/>
</dbReference>
<dbReference type="SMR" id="D2Y2E2"/>
<dbReference type="ArachnoServer" id="AS001663">
    <property type="toxin name" value="U8-theraphotoxin-Hhn1c"/>
</dbReference>
<dbReference type="GO" id="GO:0005576">
    <property type="term" value="C:extracellular region"/>
    <property type="evidence" value="ECO:0007669"/>
    <property type="project" value="UniProtKB-SubCell"/>
</dbReference>
<dbReference type="GO" id="GO:0090729">
    <property type="term" value="F:toxin activity"/>
    <property type="evidence" value="ECO:0007669"/>
    <property type="project" value="UniProtKB-KW"/>
</dbReference>
<dbReference type="Gene3D" id="2.10.80.10">
    <property type="entry name" value="Lipase, subunit A"/>
    <property type="match status" value="1"/>
</dbReference>
<dbReference type="InterPro" id="IPR023569">
    <property type="entry name" value="Prokineticin_domain"/>
</dbReference>
<dbReference type="Pfam" id="PF06607">
    <property type="entry name" value="Prokineticin"/>
    <property type="match status" value="1"/>
</dbReference>
<proteinExistence type="evidence at transcript level"/>
<reference key="1">
    <citation type="journal article" date="2010" name="J. Proteome Res.">
        <title>Molecular diversification of peptide toxins from the tarantula Haplopelma hainanum (Ornithoctonus hainana) venom based on transcriptomic, peptidomic, and genomic analyses.</title>
        <authorList>
            <person name="Tang X."/>
            <person name="Zhang Y."/>
            <person name="Hu W."/>
            <person name="Xu D."/>
            <person name="Tao H."/>
            <person name="Yang X."/>
            <person name="Li Y."/>
            <person name="Jiang L."/>
            <person name="Liang S."/>
        </authorList>
    </citation>
    <scope>NUCLEOTIDE SEQUENCE [LARGE SCALE MRNA]</scope>
    <source>
        <tissue>Venom gland</tissue>
    </source>
</reference>
<feature type="signal peptide" evidence="3">
    <location>
        <begin position="1"/>
        <end position="21"/>
    </location>
</feature>
<feature type="chain" id="PRO_0000400850" description="U8-theraphotoxin-Hhn1c 2">
    <location>
        <begin position="22"/>
        <end position="84"/>
    </location>
</feature>
<feature type="disulfide bond" evidence="2">
    <location>
        <begin position="23"/>
        <end position="35"/>
    </location>
</feature>
<feature type="disulfide bond" evidence="2">
    <location>
        <begin position="29"/>
        <end position="44"/>
    </location>
</feature>
<feature type="disulfide bond" evidence="2">
    <location>
        <begin position="34"/>
        <end position="67"/>
    </location>
</feature>
<feature type="disulfide bond" evidence="2">
    <location>
        <begin position="54"/>
        <end position="75"/>
    </location>
</feature>
<feature type="disulfide bond" evidence="2">
    <location>
        <begin position="69"/>
        <end position="81"/>
    </location>
</feature>
<evidence type="ECO:0000250" key="1"/>
<evidence type="ECO:0000250" key="2">
    <source>
        <dbReference type="UniProtKB" id="Q9PW66"/>
    </source>
</evidence>
<evidence type="ECO:0000255" key="3"/>
<evidence type="ECO:0000305" key="4"/>
<evidence type="ECO:0000312" key="5">
    <source>
        <dbReference type="EMBL" id="ADB56835.1"/>
    </source>
</evidence>
<organism>
    <name type="scientific">Cyriopagopus hainanus</name>
    <name type="common">Chinese bird spider</name>
    <name type="synonym">Haplopelma hainanum</name>
    <dbReference type="NCBI Taxonomy" id="209901"/>
    <lineage>
        <taxon>Eukaryota</taxon>
        <taxon>Metazoa</taxon>
        <taxon>Ecdysozoa</taxon>
        <taxon>Arthropoda</taxon>
        <taxon>Chelicerata</taxon>
        <taxon>Arachnida</taxon>
        <taxon>Araneae</taxon>
        <taxon>Mygalomorphae</taxon>
        <taxon>Theraphosidae</taxon>
        <taxon>Haplopelma</taxon>
    </lineage>
</organism>
<keyword id="KW-1015">Disulfide bond</keyword>
<keyword id="KW-0964">Secreted</keyword>
<keyword id="KW-0732">Signal</keyword>
<keyword id="KW-0800">Toxin</keyword>